<dbReference type="EMBL" id="BC142347">
    <property type="protein sequence ID" value="AAI42348.1"/>
    <property type="molecule type" value="mRNA"/>
</dbReference>
<dbReference type="RefSeq" id="NP_001096778.1">
    <property type="nucleotide sequence ID" value="NM_001103308.2"/>
</dbReference>
<dbReference type="PDB" id="7RRO">
    <property type="method" value="EM"/>
    <property type="resolution" value="3.40 A"/>
    <property type="chains" value="I1/I2=1-683"/>
</dbReference>
<dbReference type="PDB" id="9CPB">
    <property type="method" value="EM"/>
    <property type="resolution" value="3.52 A"/>
    <property type="chains" value="6Y/6Z=1-683"/>
</dbReference>
<dbReference type="PDBsum" id="7RRO"/>
<dbReference type="PDBsum" id="9CPB"/>
<dbReference type="EMDB" id="EMD-24664"/>
<dbReference type="EMDB" id="EMD-45801"/>
<dbReference type="EMDB" id="EMD-50664"/>
<dbReference type="SMR" id="A5PK42"/>
<dbReference type="FunCoup" id="A5PK42">
    <property type="interactions" value="500"/>
</dbReference>
<dbReference type="STRING" id="9913.ENSBTAP00000018203"/>
<dbReference type="PaxDb" id="9913-ENSBTAP00000018203"/>
<dbReference type="Ensembl" id="ENSBTAT00000018203.7">
    <property type="protein sequence ID" value="ENSBTAP00000018203.5"/>
    <property type="gene ID" value="ENSBTAG00000013698.7"/>
</dbReference>
<dbReference type="GeneID" id="788831"/>
<dbReference type="KEGG" id="bta:788831"/>
<dbReference type="CTD" id="83538"/>
<dbReference type="VEuPathDB" id="HostDB:ENSBTAG00000013698"/>
<dbReference type="VGNC" id="VGNC:36464">
    <property type="gene designation" value="ODAD4"/>
</dbReference>
<dbReference type="eggNOG" id="KOG1124">
    <property type="taxonomic scope" value="Eukaryota"/>
</dbReference>
<dbReference type="GeneTree" id="ENSGT00390000007911"/>
<dbReference type="HOGENOM" id="CLU_023648_2_1_1"/>
<dbReference type="InParanoid" id="A5PK42"/>
<dbReference type="OMA" id="VMPGCKP"/>
<dbReference type="OrthoDB" id="10268002at2759"/>
<dbReference type="TreeFam" id="TF323661"/>
<dbReference type="Proteomes" id="UP000009136">
    <property type="component" value="Chromosome 19"/>
</dbReference>
<dbReference type="Bgee" id="ENSBTAG00000013698">
    <property type="expression patterns" value="Expressed in oviduct epithelium and 62 other cell types or tissues"/>
</dbReference>
<dbReference type="GO" id="GO:0097728">
    <property type="term" value="C:9+0 motile cilium"/>
    <property type="evidence" value="ECO:0007669"/>
    <property type="project" value="Ensembl"/>
</dbReference>
<dbReference type="GO" id="GO:0097729">
    <property type="term" value="C:9+2 motile cilium"/>
    <property type="evidence" value="ECO:0007669"/>
    <property type="project" value="Ensembl"/>
</dbReference>
<dbReference type="GO" id="GO:0005737">
    <property type="term" value="C:cytoplasm"/>
    <property type="evidence" value="ECO:0000318"/>
    <property type="project" value="GO_Central"/>
</dbReference>
<dbReference type="GO" id="GO:0005576">
    <property type="term" value="C:extracellular region"/>
    <property type="evidence" value="ECO:0007669"/>
    <property type="project" value="GOC"/>
</dbReference>
<dbReference type="GO" id="GO:0120228">
    <property type="term" value="C:outer dynein arm docking complex"/>
    <property type="evidence" value="ECO:0000250"/>
    <property type="project" value="UniProtKB"/>
</dbReference>
<dbReference type="GO" id="GO:0007420">
    <property type="term" value="P:brain development"/>
    <property type="evidence" value="ECO:0007669"/>
    <property type="project" value="Ensembl"/>
</dbReference>
<dbReference type="GO" id="GO:0090660">
    <property type="term" value="P:cerebrospinal fluid circulation"/>
    <property type="evidence" value="ECO:0007669"/>
    <property type="project" value="Ensembl"/>
</dbReference>
<dbReference type="GO" id="GO:0003341">
    <property type="term" value="P:cilium movement"/>
    <property type="evidence" value="ECO:0000314"/>
    <property type="project" value="UniProtKB"/>
</dbReference>
<dbReference type="GO" id="GO:0060287">
    <property type="term" value="P:epithelial cilium movement involved in determination of left/right asymmetry"/>
    <property type="evidence" value="ECO:0007669"/>
    <property type="project" value="Ensembl"/>
</dbReference>
<dbReference type="GO" id="GO:0007507">
    <property type="term" value="P:heart development"/>
    <property type="evidence" value="ECO:0007669"/>
    <property type="project" value="Ensembl"/>
</dbReference>
<dbReference type="GO" id="GO:0030324">
    <property type="term" value="P:lung development"/>
    <property type="evidence" value="ECO:0007669"/>
    <property type="project" value="Ensembl"/>
</dbReference>
<dbReference type="GO" id="GO:0120197">
    <property type="term" value="P:mucociliary clearance"/>
    <property type="evidence" value="ECO:0007669"/>
    <property type="project" value="Ensembl"/>
</dbReference>
<dbReference type="GO" id="GO:0036158">
    <property type="term" value="P:outer dynein arm assembly"/>
    <property type="evidence" value="ECO:0000314"/>
    <property type="project" value="UniProtKB"/>
</dbReference>
<dbReference type="GO" id="GO:0120229">
    <property type="term" value="P:protein localization to motile cilium"/>
    <property type="evidence" value="ECO:0007669"/>
    <property type="project" value="Ensembl"/>
</dbReference>
<dbReference type="FunFam" id="1.25.40.10:FF:000189">
    <property type="entry name" value="Tetratricopeptide repeat domain 25"/>
    <property type="match status" value="1"/>
</dbReference>
<dbReference type="FunFam" id="1.25.40.10:FF:000274">
    <property type="entry name" value="Tetratricopeptide repeat domain 25"/>
    <property type="match status" value="1"/>
</dbReference>
<dbReference type="Gene3D" id="1.25.40.10">
    <property type="entry name" value="Tetratricopeptide repeat domain"/>
    <property type="match status" value="2"/>
</dbReference>
<dbReference type="InterPro" id="IPR040111">
    <property type="entry name" value="ODAD4"/>
</dbReference>
<dbReference type="InterPro" id="IPR011990">
    <property type="entry name" value="TPR-like_helical_dom_sf"/>
</dbReference>
<dbReference type="InterPro" id="IPR019734">
    <property type="entry name" value="TPR_rpt"/>
</dbReference>
<dbReference type="PANTHER" id="PTHR23040">
    <property type="match status" value="1"/>
</dbReference>
<dbReference type="PANTHER" id="PTHR23040:SF1">
    <property type="entry name" value="OUTER DYNEIN ARM-DOCKING COMPLEX SUBUNIT 4"/>
    <property type="match status" value="1"/>
</dbReference>
<dbReference type="Pfam" id="PF13181">
    <property type="entry name" value="TPR_8"/>
    <property type="match status" value="1"/>
</dbReference>
<dbReference type="SMART" id="SM00028">
    <property type="entry name" value="TPR"/>
    <property type="match status" value="7"/>
</dbReference>
<dbReference type="SUPFAM" id="SSF48452">
    <property type="entry name" value="TPR-like"/>
    <property type="match status" value="1"/>
</dbReference>
<dbReference type="PROSITE" id="PS50005">
    <property type="entry name" value="TPR"/>
    <property type="match status" value="6"/>
</dbReference>
<dbReference type="PROSITE" id="PS50293">
    <property type="entry name" value="TPR_REGION"/>
    <property type="match status" value="2"/>
</dbReference>
<proteinExistence type="evidence at protein level"/>
<protein>
    <recommendedName>
        <fullName>Outer dynein arm-docking complex subunit 4</fullName>
    </recommendedName>
    <alternativeName>
        <fullName>Tetratricopeptide repeat protein 25</fullName>
        <shortName>TPR repeat protein 25</shortName>
    </alternativeName>
</protein>
<comment type="function">
    <text evidence="6">Component of the outer dynein arm-docking complex (ODA-DC) that mediates outer dynein arms (ODA) binding onto the doublet microtubule. Plays an essential role for the assembly of ODA-DC and for the docking of ODA in ciliary axoneme.</text>
</comment>
<comment type="subunit">
    <text evidence="1 2 6">Component of the outer dynein arm-docking complex along with ODAD1, ODAD2 and ODAD3. Interacts with ODAD1; this interaction may facilitate the recruitment and/or attachment of outer dynein arm docking complex proteins, including ODAD1, ODAD3 and ODAD2, to ciliary axonemes (PubMed:34715025). Interacts with components of the IFT complex A, including IFT140, TTC21B/IFT139 and WDR19/IFT144, and the IFT complex B, including IFT46, IFT52 and IFT57 (By similarity). Interacts with CFAP53 (By similarity).</text>
</comment>
<comment type="subcellular location">
    <subcellularLocation>
        <location evidence="6">Cytoplasm</location>
        <location evidence="6">Cytoskeleton</location>
        <location evidence="6">Cilium axoneme</location>
    </subcellularLocation>
</comment>
<comment type="tissue specificity">
    <text evidence="6">Expressed in trachea multiciliated cells.</text>
</comment>
<keyword id="KW-0002">3D-structure</keyword>
<keyword id="KW-0966">Cell projection</keyword>
<keyword id="KW-0963">Cytoplasm</keyword>
<keyword id="KW-0206">Cytoskeleton</keyword>
<keyword id="KW-1185">Reference proteome</keyword>
<keyword id="KW-0677">Repeat</keyword>
<keyword id="KW-0802">TPR repeat</keyword>
<feature type="chain" id="PRO_0000456155" description="Outer dynein arm-docking complex subunit 4">
    <location>
        <begin position="1"/>
        <end position="683"/>
    </location>
</feature>
<feature type="repeat" description="TPR 1" evidence="3 4">
    <location>
        <begin position="13"/>
        <end position="46"/>
    </location>
</feature>
<feature type="repeat" description="TPR 2" evidence="4">
    <location>
        <begin position="47"/>
        <end position="80"/>
    </location>
</feature>
<feature type="repeat" description="TPR 8" evidence="3">
    <location>
        <begin position="48"/>
        <end position="80"/>
    </location>
</feature>
<feature type="repeat" description="TPR 3" evidence="3 4">
    <location>
        <begin position="81"/>
        <end position="114"/>
    </location>
</feature>
<feature type="repeat" description="TPR 10" evidence="3">
    <location>
        <begin position="275"/>
        <end position="311"/>
    </location>
</feature>
<feature type="repeat" description="TPR 4" evidence="3 4">
    <location>
        <begin position="320"/>
        <end position="353"/>
    </location>
</feature>
<feature type="repeat" description="TPR 5" evidence="3 4">
    <location>
        <begin position="360"/>
        <end position="393"/>
    </location>
</feature>
<feature type="repeat" description="TPR 13" evidence="3">
    <location>
        <begin position="397"/>
        <end position="430"/>
    </location>
</feature>
<feature type="repeat" description="TPR 6" evidence="3 4">
    <location>
        <begin position="437"/>
        <end position="470"/>
    </location>
</feature>
<feature type="repeat" description="TPR 15" evidence="3">
    <location>
        <begin position="592"/>
        <end position="625"/>
    </location>
</feature>
<feature type="region of interest" description="Disordered" evidence="5">
    <location>
        <begin position="158"/>
        <end position="179"/>
    </location>
</feature>
<feature type="region of interest" description="Disordered" evidence="5">
    <location>
        <begin position="510"/>
        <end position="537"/>
    </location>
</feature>
<feature type="region of interest" description="Disordered" evidence="5">
    <location>
        <begin position="553"/>
        <end position="683"/>
    </location>
</feature>
<feature type="compositionally biased region" description="Basic residues" evidence="5">
    <location>
        <begin position="167"/>
        <end position="179"/>
    </location>
</feature>
<feature type="compositionally biased region" description="Basic and acidic residues" evidence="5">
    <location>
        <begin position="521"/>
        <end position="537"/>
    </location>
</feature>
<feature type="compositionally biased region" description="Basic and acidic residues" evidence="5">
    <location>
        <begin position="566"/>
        <end position="590"/>
    </location>
</feature>
<feature type="compositionally biased region" description="Basic and acidic residues" evidence="5">
    <location>
        <begin position="602"/>
        <end position="620"/>
    </location>
</feature>
<feature type="compositionally biased region" description="Basic and acidic residues" evidence="5">
    <location>
        <begin position="629"/>
        <end position="675"/>
    </location>
</feature>
<name>ODAD4_BOVIN</name>
<organism evidence="8">
    <name type="scientific">Bos taurus</name>
    <name type="common">Bovine</name>
    <dbReference type="NCBI Taxonomy" id="9913"/>
    <lineage>
        <taxon>Eukaryota</taxon>
        <taxon>Metazoa</taxon>
        <taxon>Chordata</taxon>
        <taxon>Craniata</taxon>
        <taxon>Vertebrata</taxon>
        <taxon>Euteleostomi</taxon>
        <taxon>Mammalia</taxon>
        <taxon>Eutheria</taxon>
        <taxon>Laurasiatheria</taxon>
        <taxon>Artiodactyla</taxon>
        <taxon>Ruminantia</taxon>
        <taxon>Pecora</taxon>
        <taxon>Bovidae</taxon>
        <taxon>Bovinae</taxon>
        <taxon>Bos</taxon>
    </lineage>
</organism>
<evidence type="ECO:0000250" key="1">
    <source>
        <dbReference type="UniProtKB" id="Q96NG3"/>
    </source>
</evidence>
<evidence type="ECO:0000250" key="2">
    <source>
        <dbReference type="UniProtKB" id="Q9D4B2"/>
    </source>
</evidence>
<evidence type="ECO:0000255" key="3"/>
<evidence type="ECO:0000255" key="4">
    <source>
        <dbReference type="PROSITE-ProRule" id="PRU00339"/>
    </source>
</evidence>
<evidence type="ECO:0000256" key="5">
    <source>
        <dbReference type="SAM" id="MobiDB-lite"/>
    </source>
</evidence>
<evidence type="ECO:0000269" key="6">
    <source>
    </source>
</evidence>
<evidence type="ECO:0000303" key="7">
    <source>
    </source>
</evidence>
<evidence type="ECO:0000312" key="8">
    <source>
        <dbReference type="EMBL" id="AAI42348.1"/>
    </source>
</evidence>
<evidence type="ECO:0000312" key="9">
    <source>
        <dbReference type="VGNC" id="VGNC:36464"/>
    </source>
</evidence>
<evidence type="ECO:0007744" key="10">
    <source>
        <dbReference type="PDB" id="7RRO"/>
    </source>
</evidence>
<gene>
    <name evidence="9" type="primary">ODAD4</name>
    <name evidence="7" type="synonym">TTC25</name>
</gene>
<reference key="1">
    <citation type="journal article" date="2009" name="Genome Biol.">
        <title>A whole-genome assembly of the domestic cow, Bos taurus.</title>
        <authorList>
            <person name="Zimin A.V."/>
            <person name="Delcher A.L."/>
            <person name="Florea L."/>
            <person name="Kelley D.R."/>
            <person name="Schatz M.C."/>
            <person name="Puiu D."/>
            <person name="Hanrahan F."/>
            <person name="Pertea G."/>
            <person name="Van Tassell C.P."/>
            <person name="Sonstegard T.S."/>
            <person name="Marcais G."/>
            <person name="Roberts M."/>
            <person name="Subramanian P."/>
            <person name="Yorke J.A."/>
            <person name="Salzberg S.L."/>
        </authorList>
    </citation>
    <scope>NUCLEOTIDE SEQUENCE [LARGE SCALE GENOMIC DNA]</scope>
    <source>
        <strain>Hereford</strain>
    </source>
</reference>
<reference key="2">
    <citation type="submission" date="2007-06" db="EMBL/GenBank/DDBJ databases">
        <authorList>
            <consortium name="NIH - Mammalian Gene Collection (MGC) project"/>
        </authorList>
    </citation>
    <scope>NUCLEOTIDE SEQUENCE [LARGE SCALE MRNA]</scope>
</reference>
<reference evidence="10" key="3">
    <citation type="journal article" date="2021" name="Cell">
        <title>De novo identification of mammalian ciliary motility proteins using cryo-EM.</title>
        <authorList>
            <person name="Gui M."/>
            <person name="Farley H."/>
            <person name="Anujan P."/>
            <person name="Anderson J.R."/>
            <person name="Maxwell D.W."/>
            <person name="Whitchurch J.B."/>
            <person name="Botsch J.J."/>
            <person name="Qiu T."/>
            <person name="Meleppattu S."/>
            <person name="Singh S.K."/>
            <person name="Zhang Q."/>
            <person name="Thompson J."/>
            <person name="Lucas J.S."/>
            <person name="Bingle C.D."/>
            <person name="Norris D.P."/>
            <person name="Roy S."/>
            <person name="Brown A."/>
        </authorList>
    </citation>
    <scope>STRUCTURE BY ELECTRON MICROSCOPY (3.40 ANGSTROMS)</scope>
    <scope>SUBUNIT</scope>
    <scope>FUNCTION</scope>
    <scope>SUBCELLULAR LOCATION</scope>
    <scope>TISSUE SPECIFICITY</scope>
</reference>
<sequence length="683" mass="78368">MADPENEVLRSTFPSYMAEGERLYLCGEFAKAAHSFSNALHLQSGDKNCLVARSKCFLKMGELEKSLEDAEASLQGDPTFCKGILQKAETLYTMGDFEFALVFYHRGYKLRPDREFKVGIQKAQEAINNSVGSPSSIKLENKGDLSFLSKQAESMRAQQKPHPVRQLIHHPKRESKRKGSLKSEKIVRQLLGELYVDKEYLEKLLLDEDLIKGTIKHGLTVEDLIMTGINYLETRSDFWRQQKPIYARERDRKLMQEKWLRDRKRRPSQTARYILKSLEDIDMLLTSGSAEGSLQKAEKVLKKVLEWNKEEVPNKDELVGNLYSCIGNAQIELGQMVAALQSHRKDLEIAKEYDLPDAKSRALDNIGRVFARVGKFQQAIDTWEEKIPLAKTTLEKTWLFHEIGRCYLELDQAWEAQSYGEKSQQCAEEEGDMEWQLNASVLVAQAQVKLRDFESAVNNFEKALERAKLVHNNEAQQAIINALDDANKGIIEELKKTNYREILKEKKEKENATMLDGQTRTAKEKETRKTKDEPEKVMKQWVQEQTEKQLEGVLSKETLGVTARQPEQRQREDPEKASWRKELGAKERGPGDTAKGQFGEAGRTEQNREETREIYRRPSELDQNLSDESSPRESEGLEKRLSKTDGGELEALGKTESGEIKEMEITENSEKIEKDEKEDEPIE</sequence>
<accession>A5PK42</accession>
<accession>F1MKD0</accession>